<keyword id="KW-0328">Glycosyltransferase</keyword>
<keyword id="KW-0460">Magnesium</keyword>
<keyword id="KW-0665">Pyrimidine biosynthesis</keyword>
<keyword id="KW-0808">Transferase</keyword>
<comment type="function">
    <text evidence="1">Catalyzes the transfer of a ribosyl phosphate group from 5-phosphoribose 1-diphosphate to orotate, leading to the formation of orotidine monophosphate (OMP).</text>
</comment>
<comment type="catalytic activity">
    <reaction evidence="1">
        <text>orotidine 5'-phosphate + diphosphate = orotate + 5-phospho-alpha-D-ribose 1-diphosphate</text>
        <dbReference type="Rhea" id="RHEA:10380"/>
        <dbReference type="ChEBI" id="CHEBI:30839"/>
        <dbReference type="ChEBI" id="CHEBI:33019"/>
        <dbReference type="ChEBI" id="CHEBI:57538"/>
        <dbReference type="ChEBI" id="CHEBI:58017"/>
        <dbReference type="EC" id="2.4.2.10"/>
    </reaction>
</comment>
<comment type="cofactor">
    <cofactor evidence="1">
        <name>Mg(2+)</name>
        <dbReference type="ChEBI" id="CHEBI:18420"/>
    </cofactor>
</comment>
<comment type="pathway">
    <text evidence="1">Pyrimidine metabolism; UMP biosynthesis via de novo pathway; UMP from orotate: step 1/2.</text>
</comment>
<comment type="subunit">
    <text evidence="1">Homodimer.</text>
</comment>
<comment type="similarity">
    <text evidence="1">Belongs to the purine/pyrimidine phosphoribosyltransferase family. PyrE subfamily.</text>
</comment>
<proteinExistence type="inferred from homology"/>
<accession>Q97CT9</accession>
<organism>
    <name type="scientific">Thermoplasma volcanium (strain ATCC 51530 / DSM 4299 / JCM 9571 / NBRC 15438 / GSS1)</name>
    <dbReference type="NCBI Taxonomy" id="273116"/>
    <lineage>
        <taxon>Archaea</taxon>
        <taxon>Methanobacteriati</taxon>
        <taxon>Thermoplasmatota</taxon>
        <taxon>Thermoplasmata</taxon>
        <taxon>Thermoplasmatales</taxon>
        <taxon>Thermoplasmataceae</taxon>
        <taxon>Thermoplasma</taxon>
    </lineage>
</organism>
<feature type="chain" id="PRO_0000110793" description="Orotate phosphoribosyltransferase">
    <location>
        <begin position="1"/>
        <end position="166"/>
    </location>
</feature>
<feature type="binding site" evidence="1">
    <location>
        <position position="83"/>
    </location>
    <ligand>
        <name>5-phospho-alpha-D-ribose 1-diphosphate</name>
        <dbReference type="ChEBI" id="CHEBI:58017"/>
        <note>ligand shared between dimeric partners</note>
    </ligand>
</feature>
<feature type="binding site" description="in other chain" evidence="1">
    <location>
        <position position="84"/>
    </location>
    <ligand>
        <name>5-phospho-alpha-D-ribose 1-diphosphate</name>
        <dbReference type="ChEBI" id="CHEBI:58017"/>
        <note>ligand shared between dimeric partners</note>
    </ligand>
</feature>
<feature type="binding site" evidence="1">
    <location>
        <position position="86"/>
    </location>
    <ligand>
        <name>5-phospho-alpha-D-ribose 1-diphosphate</name>
        <dbReference type="ChEBI" id="CHEBI:58017"/>
        <note>ligand shared between dimeric partners</note>
    </ligand>
</feature>
<feature type="binding site" evidence="1">
    <location>
        <position position="88"/>
    </location>
    <ligand>
        <name>5-phospho-alpha-D-ribose 1-diphosphate</name>
        <dbReference type="ChEBI" id="CHEBI:58017"/>
        <note>ligand shared between dimeric partners</note>
    </ligand>
</feature>
<feature type="binding site" description="in other chain" evidence="1">
    <location>
        <begin position="108"/>
        <end position="116"/>
    </location>
    <ligand>
        <name>5-phospho-alpha-D-ribose 1-diphosphate</name>
        <dbReference type="ChEBI" id="CHEBI:58017"/>
        <note>ligand shared between dimeric partners</note>
    </ligand>
</feature>
<feature type="binding site" evidence="1">
    <location>
        <position position="112"/>
    </location>
    <ligand>
        <name>orotate</name>
        <dbReference type="ChEBI" id="CHEBI:30839"/>
    </ligand>
</feature>
<feature type="binding site" evidence="1">
    <location>
        <position position="140"/>
    </location>
    <ligand>
        <name>orotate</name>
        <dbReference type="ChEBI" id="CHEBI:30839"/>
    </ligand>
</feature>
<gene>
    <name evidence="1" type="primary">pyrE</name>
    <name type="ordered locus">TV0012</name>
    <name type="ORF">TVG0009630</name>
</gene>
<reference key="1">
    <citation type="journal article" date="2000" name="Proc. Natl. Acad. Sci. U.S.A.">
        <title>Archaeal adaptation to higher temperatures revealed by genomic sequence of Thermoplasma volcanium.</title>
        <authorList>
            <person name="Kawashima T."/>
            <person name="Amano N."/>
            <person name="Koike H."/>
            <person name="Makino S."/>
            <person name="Higuchi S."/>
            <person name="Kawashima-Ohya Y."/>
            <person name="Watanabe K."/>
            <person name="Yamazaki M."/>
            <person name="Kanehori K."/>
            <person name="Kawamoto T."/>
            <person name="Nunoshiba T."/>
            <person name="Yamamoto Y."/>
            <person name="Aramaki H."/>
            <person name="Makino K."/>
            <person name="Suzuki M."/>
        </authorList>
    </citation>
    <scope>NUCLEOTIDE SEQUENCE [LARGE SCALE GENOMIC DNA]</scope>
    <source>
        <strain>ATCC 51530 / DSM 4299 / JCM 9571 / NBRC 15438 / GSS1</strain>
    </source>
</reference>
<sequence>MLSEDLVKSGAIKFGDFILTSGKRSDYYVDIKEAATDPNLLSEIASEFSKMIHARKIAGMELGAVPLIVATSLNMGIPYVIVRKERSHGTLSLIVGRLNRGEEVDVIEDVVTTGNSVLKAINVLRENGVVVKDAYCVVDREEGGAKLLENNGIKLHPIVRISELKR</sequence>
<name>PYRE_THEVO</name>
<evidence type="ECO:0000255" key="1">
    <source>
        <dbReference type="HAMAP-Rule" id="MF_01208"/>
    </source>
</evidence>
<protein>
    <recommendedName>
        <fullName evidence="1">Orotate phosphoribosyltransferase</fullName>
        <shortName evidence="1">OPRT</shortName>
        <shortName evidence="1">OPRTase</shortName>
        <ecNumber evidence="1">2.4.2.10</ecNumber>
    </recommendedName>
</protein>
<dbReference type="EC" id="2.4.2.10" evidence="1"/>
<dbReference type="EMBL" id="BA000011">
    <property type="protein sequence ID" value="BAB59154.1"/>
    <property type="molecule type" value="Genomic_DNA"/>
</dbReference>
<dbReference type="RefSeq" id="WP_010916269.1">
    <property type="nucleotide sequence ID" value="NC_002689.2"/>
</dbReference>
<dbReference type="SMR" id="Q97CT9"/>
<dbReference type="STRING" id="273116.gene:9380777"/>
<dbReference type="PaxDb" id="273116-14324226"/>
<dbReference type="GeneID" id="1441497"/>
<dbReference type="KEGG" id="tvo:TVG0009630"/>
<dbReference type="eggNOG" id="arCOG00029">
    <property type="taxonomic scope" value="Archaea"/>
</dbReference>
<dbReference type="HOGENOM" id="CLU_074878_2_0_2"/>
<dbReference type="OrthoDB" id="9089at2157"/>
<dbReference type="PhylomeDB" id="Q97CT9"/>
<dbReference type="UniPathway" id="UPA00070">
    <property type="reaction ID" value="UER00119"/>
</dbReference>
<dbReference type="Proteomes" id="UP000001017">
    <property type="component" value="Chromosome"/>
</dbReference>
<dbReference type="GO" id="GO:0000287">
    <property type="term" value="F:magnesium ion binding"/>
    <property type="evidence" value="ECO:0007669"/>
    <property type="project" value="UniProtKB-UniRule"/>
</dbReference>
<dbReference type="GO" id="GO:0004588">
    <property type="term" value="F:orotate phosphoribosyltransferase activity"/>
    <property type="evidence" value="ECO:0007669"/>
    <property type="project" value="UniProtKB-UniRule"/>
</dbReference>
<dbReference type="GO" id="GO:0044205">
    <property type="term" value="P:'de novo' UMP biosynthetic process"/>
    <property type="evidence" value="ECO:0007669"/>
    <property type="project" value="UniProtKB-UniRule"/>
</dbReference>
<dbReference type="GO" id="GO:0019856">
    <property type="term" value="P:pyrimidine nucleobase biosynthetic process"/>
    <property type="evidence" value="ECO:0007669"/>
    <property type="project" value="TreeGrafter"/>
</dbReference>
<dbReference type="CDD" id="cd06223">
    <property type="entry name" value="PRTases_typeI"/>
    <property type="match status" value="1"/>
</dbReference>
<dbReference type="Gene3D" id="3.40.50.2020">
    <property type="match status" value="1"/>
</dbReference>
<dbReference type="HAMAP" id="MF_01208">
    <property type="entry name" value="PyrE"/>
    <property type="match status" value="1"/>
</dbReference>
<dbReference type="InterPro" id="IPR023031">
    <property type="entry name" value="OPRT"/>
</dbReference>
<dbReference type="InterPro" id="IPR004467">
    <property type="entry name" value="Or_phspho_trans_dom"/>
</dbReference>
<dbReference type="InterPro" id="IPR000836">
    <property type="entry name" value="PRibTrfase_dom"/>
</dbReference>
<dbReference type="InterPro" id="IPR029057">
    <property type="entry name" value="PRTase-like"/>
</dbReference>
<dbReference type="NCBIfam" id="TIGR00336">
    <property type="entry name" value="pyrE"/>
    <property type="match status" value="1"/>
</dbReference>
<dbReference type="PANTHER" id="PTHR19278">
    <property type="entry name" value="OROTATE PHOSPHORIBOSYLTRANSFERASE"/>
    <property type="match status" value="1"/>
</dbReference>
<dbReference type="PANTHER" id="PTHR19278:SF9">
    <property type="entry name" value="URIDINE 5'-MONOPHOSPHATE SYNTHASE"/>
    <property type="match status" value="1"/>
</dbReference>
<dbReference type="Pfam" id="PF00156">
    <property type="entry name" value="Pribosyltran"/>
    <property type="match status" value="1"/>
</dbReference>
<dbReference type="SUPFAM" id="SSF53271">
    <property type="entry name" value="PRTase-like"/>
    <property type="match status" value="1"/>
</dbReference>